<sequence length="383" mass="40361">MQNRHHARLLPSSALLSHEAAAGVMLMAASAIGMVFANSIWQASYEYWLNIETGPLTMRGWINDALMALFFLLAGLEIKREILYGHLSHWSQRLLPGVAAIGGMVVPAIIYVAFNHSGEALRGWAIPTATDIAFALGVLALAGSRVPGILKVFLTALAIVDDLGAVIVIALFYTGTLSVLPGAGVAAILGLLLMLNRQGVRTLFPYLLAGVPLWWLTLKSGIHPTVAGVGLALLIPAGHDEASPLMRLEHMLSWPVRFVILPLFGFANAGISLHGVTVGQMLSPLTLGVGAALMLGKPLGVLGAVSILQLSGASGFPPYITWRHRIGIAFLCGIGFTMSLFIAILAFPGTAAVNQIKLGILSGSMLSGLCGYILLRGPAVADR</sequence>
<reference key="1">
    <citation type="journal article" date="2007" name="J. Bacteriol.">
        <title>Genome sequence analysis of the emerging human pathogenic acetic acid bacterium Granulibacter bethesdensis.</title>
        <authorList>
            <person name="Greenberg D.E."/>
            <person name="Porcella S.F."/>
            <person name="Zelazny A.M."/>
            <person name="Virtaneva K."/>
            <person name="Sturdevant D.E."/>
            <person name="Kupko J.J. III"/>
            <person name="Barbian K.D."/>
            <person name="Babar A."/>
            <person name="Dorward D.W."/>
            <person name="Holland S.M."/>
        </authorList>
    </citation>
    <scope>NUCLEOTIDE SEQUENCE [LARGE SCALE GENOMIC DNA]</scope>
    <source>
        <strain>ATCC BAA-1260 / CGDNIH1</strain>
    </source>
</reference>
<protein>
    <recommendedName>
        <fullName evidence="1">Na(+)/H(+) antiporter NhaA</fullName>
    </recommendedName>
    <alternativeName>
        <fullName evidence="1">Sodium/proton antiporter NhaA</fullName>
    </alternativeName>
</protein>
<organism>
    <name type="scientific">Granulibacter bethesdensis (strain ATCC BAA-1260 / CGDNIH1)</name>
    <dbReference type="NCBI Taxonomy" id="391165"/>
    <lineage>
        <taxon>Bacteria</taxon>
        <taxon>Pseudomonadati</taxon>
        <taxon>Pseudomonadota</taxon>
        <taxon>Alphaproteobacteria</taxon>
        <taxon>Acetobacterales</taxon>
        <taxon>Acetobacteraceae</taxon>
        <taxon>Granulibacter</taxon>
    </lineage>
</organism>
<dbReference type="EMBL" id="CP000394">
    <property type="protein sequence ID" value="ABI62098.1"/>
    <property type="molecule type" value="Genomic_DNA"/>
</dbReference>
<dbReference type="RefSeq" id="WP_011631907.1">
    <property type="nucleotide sequence ID" value="NC_008343.2"/>
</dbReference>
<dbReference type="SMR" id="Q0BSV4"/>
<dbReference type="STRING" id="391165.GbCGDNIH1_1200"/>
<dbReference type="KEGG" id="gbe:GbCGDNIH1_1200"/>
<dbReference type="eggNOG" id="COG3004">
    <property type="taxonomic scope" value="Bacteria"/>
</dbReference>
<dbReference type="HOGENOM" id="CLU_015803_1_0_5"/>
<dbReference type="OrthoDB" id="9808135at2"/>
<dbReference type="Proteomes" id="UP000001963">
    <property type="component" value="Chromosome"/>
</dbReference>
<dbReference type="GO" id="GO:0005886">
    <property type="term" value="C:plasma membrane"/>
    <property type="evidence" value="ECO:0007669"/>
    <property type="project" value="UniProtKB-SubCell"/>
</dbReference>
<dbReference type="GO" id="GO:0015385">
    <property type="term" value="F:sodium:proton antiporter activity"/>
    <property type="evidence" value="ECO:0007669"/>
    <property type="project" value="TreeGrafter"/>
</dbReference>
<dbReference type="GO" id="GO:0006885">
    <property type="term" value="P:regulation of pH"/>
    <property type="evidence" value="ECO:0007669"/>
    <property type="project" value="InterPro"/>
</dbReference>
<dbReference type="Gene3D" id="1.20.1530.10">
    <property type="entry name" value="Na+/H+ antiporter like domain"/>
    <property type="match status" value="1"/>
</dbReference>
<dbReference type="HAMAP" id="MF_01844">
    <property type="entry name" value="NhaA"/>
    <property type="match status" value="1"/>
</dbReference>
<dbReference type="InterPro" id="IPR023171">
    <property type="entry name" value="Na/H_antiporter_dom_sf"/>
</dbReference>
<dbReference type="InterPro" id="IPR004670">
    <property type="entry name" value="NhaA"/>
</dbReference>
<dbReference type="NCBIfam" id="TIGR00773">
    <property type="entry name" value="NhaA"/>
    <property type="match status" value="1"/>
</dbReference>
<dbReference type="NCBIfam" id="NF007111">
    <property type="entry name" value="PRK09560.1"/>
    <property type="match status" value="1"/>
</dbReference>
<dbReference type="PANTHER" id="PTHR30341:SF0">
    <property type="entry name" value="NA(+)_H(+) ANTIPORTER NHAA"/>
    <property type="match status" value="1"/>
</dbReference>
<dbReference type="PANTHER" id="PTHR30341">
    <property type="entry name" value="SODIUM ION/PROTON ANTIPORTER NHAA-RELATED"/>
    <property type="match status" value="1"/>
</dbReference>
<dbReference type="Pfam" id="PF06965">
    <property type="entry name" value="Na_H_antiport_1"/>
    <property type="match status" value="1"/>
</dbReference>
<accession>Q0BSV4</accession>
<feature type="chain" id="PRO_0000334311" description="Na(+)/H(+) antiporter NhaA">
    <location>
        <begin position="1"/>
        <end position="383"/>
    </location>
</feature>
<feature type="transmembrane region" description="Helical" evidence="1">
    <location>
        <begin position="21"/>
        <end position="41"/>
    </location>
</feature>
<feature type="transmembrane region" description="Helical" evidence="1">
    <location>
        <begin position="56"/>
        <end position="76"/>
    </location>
</feature>
<feature type="transmembrane region" description="Helical" evidence="1">
    <location>
        <begin position="94"/>
        <end position="114"/>
    </location>
</feature>
<feature type="transmembrane region" description="Helical" evidence="1">
    <location>
        <begin position="123"/>
        <end position="143"/>
    </location>
</feature>
<feature type="transmembrane region" description="Helical" evidence="1">
    <location>
        <begin position="152"/>
        <end position="172"/>
    </location>
</feature>
<feature type="transmembrane region" description="Helical" evidence="1">
    <location>
        <begin position="175"/>
        <end position="195"/>
    </location>
</feature>
<feature type="transmembrane region" description="Helical" evidence="1">
    <location>
        <begin position="202"/>
        <end position="222"/>
    </location>
</feature>
<feature type="transmembrane region" description="Helical" evidence="1">
    <location>
        <begin position="258"/>
        <end position="278"/>
    </location>
</feature>
<feature type="transmembrane region" description="Helical" evidence="1">
    <location>
        <begin position="287"/>
        <end position="307"/>
    </location>
</feature>
<feature type="transmembrane region" description="Helical" evidence="1">
    <location>
        <begin position="326"/>
        <end position="346"/>
    </location>
</feature>
<feature type="transmembrane region" description="Helical" evidence="1">
    <location>
        <begin position="355"/>
        <end position="375"/>
    </location>
</feature>
<keyword id="KW-0050">Antiport</keyword>
<keyword id="KW-0997">Cell inner membrane</keyword>
<keyword id="KW-1003">Cell membrane</keyword>
<keyword id="KW-0406">Ion transport</keyword>
<keyword id="KW-0472">Membrane</keyword>
<keyword id="KW-1185">Reference proteome</keyword>
<keyword id="KW-0915">Sodium</keyword>
<keyword id="KW-0739">Sodium transport</keyword>
<keyword id="KW-0812">Transmembrane</keyword>
<keyword id="KW-1133">Transmembrane helix</keyword>
<keyword id="KW-0813">Transport</keyword>
<gene>
    <name evidence="1" type="primary">nhaA</name>
    <name type="ordered locus">GbCGDNIH1_1200</name>
</gene>
<proteinExistence type="inferred from homology"/>
<name>NHAA_GRABC</name>
<comment type="function">
    <text evidence="1">Na(+)/H(+) antiporter that extrudes sodium in exchange for external protons.</text>
</comment>
<comment type="catalytic activity">
    <reaction evidence="1">
        <text>Na(+)(in) + 2 H(+)(out) = Na(+)(out) + 2 H(+)(in)</text>
        <dbReference type="Rhea" id="RHEA:29251"/>
        <dbReference type="ChEBI" id="CHEBI:15378"/>
        <dbReference type="ChEBI" id="CHEBI:29101"/>
    </reaction>
    <physiologicalReaction direction="left-to-right" evidence="1">
        <dbReference type="Rhea" id="RHEA:29252"/>
    </physiologicalReaction>
</comment>
<comment type="subcellular location">
    <subcellularLocation>
        <location evidence="1">Cell inner membrane</location>
        <topology evidence="1">Multi-pass membrane protein</topology>
    </subcellularLocation>
</comment>
<comment type="similarity">
    <text evidence="1">Belongs to the NhaA Na(+)/H(+) (TC 2.A.33) antiporter family.</text>
</comment>
<evidence type="ECO:0000255" key="1">
    <source>
        <dbReference type="HAMAP-Rule" id="MF_01844"/>
    </source>
</evidence>